<reference key="1">
    <citation type="journal article" date="2004" name="Proc. Natl. Acad. Sci. U.S.A.">
        <title>The louse-borne human pathogen Bartonella quintana is a genomic derivative of the zoonotic agent Bartonella henselae.</title>
        <authorList>
            <person name="Alsmark U.C.M."/>
            <person name="Frank A.C."/>
            <person name="Karlberg E.O."/>
            <person name="Legault B.-A."/>
            <person name="Ardell D.H."/>
            <person name="Canbaeck B."/>
            <person name="Eriksson A.-S."/>
            <person name="Naeslund A.K."/>
            <person name="Handley S.A."/>
            <person name="Huvet M."/>
            <person name="La Scola B."/>
            <person name="Holmberg M."/>
            <person name="Andersson S.G.E."/>
        </authorList>
    </citation>
    <scope>NUCLEOTIDE SEQUENCE [LARGE SCALE GENOMIC DNA]</scope>
    <source>
        <strain>ATCC 49882 / DSM 28221 / CCUG 30454 / Houston 1</strain>
    </source>
</reference>
<name>TOLB_BARHE</name>
<feature type="signal peptide" evidence="1">
    <location>
        <begin position="1"/>
        <end position="31"/>
    </location>
</feature>
<feature type="chain" id="PRO_0000034623" description="Tol-Pal system protein TolB" evidence="1">
    <location>
        <begin position="32"/>
        <end position="443"/>
    </location>
</feature>
<feature type="region of interest" description="Disordered" evidence="2">
    <location>
        <begin position="422"/>
        <end position="443"/>
    </location>
</feature>
<dbReference type="EMBL" id="BX897699">
    <property type="protein sequence ID" value="CAF28247.1"/>
    <property type="molecule type" value="Genomic_DNA"/>
</dbReference>
<dbReference type="SMR" id="Q6G5R6"/>
<dbReference type="PaxDb" id="283166-BH14840"/>
<dbReference type="EnsemblBacteria" id="CAF28247">
    <property type="protein sequence ID" value="CAF28247"/>
    <property type="gene ID" value="BH14840"/>
</dbReference>
<dbReference type="KEGG" id="bhe:BH14840"/>
<dbReference type="eggNOG" id="COG0823">
    <property type="taxonomic scope" value="Bacteria"/>
</dbReference>
<dbReference type="OrthoDB" id="9802240at2"/>
<dbReference type="Proteomes" id="UP000000421">
    <property type="component" value="Chromosome"/>
</dbReference>
<dbReference type="GO" id="GO:0042597">
    <property type="term" value="C:periplasmic space"/>
    <property type="evidence" value="ECO:0007669"/>
    <property type="project" value="UniProtKB-SubCell"/>
</dbReference>
<dbReference type="GO" id="GO:0051301">
    <property type="term" value="P:cell division"/>
    <property type="evidence" value="ECO:0007669"/>
    <property type="project" value="UniProtKB-UniRule"/>
</dbReference>
<dbReference type="GO" id="GO:0017038">
    <property type="term" value="P:protein import"/>
    <property type="evidence" value="ECO:0007669"/>
    <property type="project" value="InterPro"/>
</dbReference>
<dbReference type="Gene3D" id="2.120.10.30">
    <property type="entry name" value="TolB, C-terminal domain"/>
    <property type="match status" value="1"/>
</dbReference>
<dbReference type="Gene3D" id="3.40.50.10070">
    <property type="entry name" value="TolB, N-terminal domain"/>
    <property type="match status" value="1"/>
</dbReference>
<dbReference type="HAMAP" id="MF_00671">
    <property type="entry name" value="TolB"/>
    <property type="match status" value="1"/>
</dbReference>
<dbReference type="InterPro" id="IPR011042">
    <property type="entry name" value="6-blade_b-propeller_TolB-like"/>
</dbReference>
<dbReference type="InterPro" id="IPR011659">
    <property type="entry name" value="PD40"/>
</dbReference>
<dbReference type="InterPro" id="IPR014167">
    <property type="entry name" value="Tol-Pal_TolB"/>
</dbReference>
<dbReference type="InterPro" id="IPR007195">
    <property type="entry name" value="TolB_N"/>
</dbReference>
<dbReference type="NCBIfam" id="TIGR02800">
    <property type="entry name" value="propeller_TolB"/>
    <property type="match status" value="1"/>
</dbReference>
<dbReference type="PANTHER" id="PTHR36842:SF1">
    <property type="entry name" value="PROTEIN TOLB"/>
    <property type="match status" value="1"/>
</dbReference>
<dbReference type="PANTHER" id="PTHR36842">
    <property type="entry name" value="PROTEIN TOLB HOMOLOG"/>
    <property type="match status" value="1"/>
</dbReference>
<dbReference type="Pfam" id="PF07676">
    <property type="entry name" value="PD40"/>
    <property type="match status" value="3"/>
</dbReference>
<dbReference type="Pfam" id="PF04052">
    <property type="entry name" value="TolB_N"/>
    <property type="match status" value="1"/>
</dbReference>
<dbReference type="SUPFAM" id="SSF52964">
    <property type="entry name" value="TolB, N-terminal domain"/>
    <property type="match status" value="1"/>
</dbReference>
<dbReference type="SUPFAM" id="SSF69304">
    <property type="entry name" value="Tricorn protease N-terminal domain"/>
    <property type="match status" value="1"/>
</dbReference>
<organism>
    <name type="scientific">Bartonella henselae (strain ATCC 49882 / DSM 28221 / CCUG 30454 / Houston 1)</name>
    <name type="common">Rochalimaea henselae</name>
    <dbReference type="NCBI Taxonomy" id="283166"/>
    <lineage>
        <taxon>Bacteria</taxon>
        <taxon>Pseudomonadati</taxon>
        <taxon>Pseudomonadota</taxon>
        <taxon>Alphaproteobacteria</taxon>
        <taxon>Hyphomicrobiales</taxon>
        <taxon>Bartonellaceae</taxon>
        <taxon>Bartonella</taxon>
    </lineage>
</organism>
<gene>
    <name evidence="1" type="primary">tolB</name>
    <name type="ordered locus">BH14840</name>
</gene>
<protein>
    <recommendedName>
        <fullName evidence="1">Tol-Pal system protein TolB</fullName>
    </recommendedName>
</protein>
<sequence length="443" mass="50141">MMIMTTRTFFSWFIVICAFWLTSFSSVPVHAQLKGTISTADFNPIPIAVTDFFSNDSIGLKIAAVVAADLERSGLFLPLDKASFLEKISNPNRQPHFPYWQEIKAQGLVIGQVIRENDGRLRVDFRLWDVFGQRQLKGRRFYTATERWRRVAHMIADEIYSEMTGESGYFDTRIVFIDETGPQNARIKRLAIMDQDGANLIYISDGSELVLTPRFSPKRQEITYMAYEHNQVPHVYLQQIEMGQRELIGTFNNMTIAPRFSSDGQKVIMSLLQNDGSANLYTMDLRTRMMTRLTTTSAIDTSASYSPDGTKIVFSSDRSGKPQIYTMNADGSNLQRISSNEGSYSTPIWSPRGDYIAFTKQLEGQFSIGVMHPDGQGERILTTGFHNEGPTWAPNGRVLMFFRKNPGMGPKIYTIDITGRNERQLPTPNDASDPAWSPLLNIQ</sequence>
<accession>Q6G5R6</accession>
<keyword id="KW-0131">Cell cycle</keyword>
<keyword id="KW-0132">Cell division</keyword>
<keyword id="KW-0574">Periplasm</keyword>
<keyword id="KW-0732">Signal</keyword>
<evidence type="ECO:0000255" key="1">
    <source>
        <dbReference type="HAMAP-Rule" id="MF_00671"/>
    </source>
</evidence>
<evidence type="ECO:0000256" key="2">
    <source>
        <dbReference type="SAM" id="MobiDB-lite"/>
    </source>
</evidence>
<proteinExistence type="inferred from homology"/>
<comment type="function">
    <text evidence="1">Part of the Tol-Pal system, which plays a role in outer membrane invagination during cell division and is important for maintaining outer membrane integrity.</text>
</comment>
<comment type="subunit">
    <text evidence="1">The Tol-Pal system is composed of five core proteins: the inner membrane proteins TolA, TolQ and TolR, the periplasmic protein TolB and the outer membrane protein Pal. They form a network linking the inner and outer membranes and the peptidoglycan layer.</text>
</comment>
<comment type="subcellular location">
    <subcellularLocation>
        <location evidence="1">Periplasm</location>
    </subcellularLocation>
</comment>
<comment type="similarity">
    <text evidence="1">Belongs to the TolB family.</text>
</comment>